<keyword id="KW-0687">Ribonucleoprotein</keyword>
<keyword id="KW-0689">Ribosomal protein</keyword>
<keyword id="KW-0694">RNA-binding</keyword>
<keyword id="KW-0699">rRNA-binding</keyword>
<name>RS20_RHOP5</name>
<organism>
    <name type="scientific">Rhodopseudomonas palustris (strain BisA53)</name>
    <dbReference type="NCBI Taxonomy" id="316055"/>
    <lineage>
        <taxon>Bacteria</taxon>
        <taxon>Pseudomonadati</taxon>
        <taxon>Pseudomonadota</taxon>
        <taxon>Alphaproteobacteria</taxon>
        <taxon>Hyphomicrobiales</taxon>
        <taxon>Nitrobacteraceae</taxon>
        <taxon>Rhodopseudomonas</taxon>
    </lineage>
</organism>
<reference key="1">
    <citation type="submission" date="2006-09" db="EMBL/GenBank/DDBJ databases">
        <title>Complete sequence of Rhodopseudomonas palustris BisA53.</title>
        <authorList>
            <consortium name="US DOE Joint Genome Institute"/>
            <person name="Copeland A."/>
            <person name="Lucas S."/>
            <person name="Lapidus A."/>
            <person name="Barry K."/>
            <person name="Detter J.C."/>
            <person name="Glavina del Rio T."/>
            <person name="Hammon N."/>
            <person name="Israni S."/>
            <person name="Dalin E."/>
            <person name="Tice H."/>
            <person name="Pitluck S."/>
            <person name="Chain P."/>
            <person name="Malfatti S."/>
            <person name="Shin M."/>
            <person name="Vergez L."/>
            <person name="Schmutz J."/>
            <person name="Larimer F."/>
            <person name="Land M."/>
            <person name="Hauser L."/>
            <person name="Pelletier D.A."/>
            <person name="Kyrpides N."/>
            <person name="Kim E."/>
            <person name="Harwood C.S."/>
            <person name="Oda Y."/>
            <person name="Richardson P."/>
        </authorList>
    </citation>
    <scope>NUCLEOTIDE SEQUENCE [LARGE SCALE GENOMIC DNA]</scope>
    <source>
        <strain>BisA53</strain>
    </source>
</reference>
<dbReference type="EMBL" id="CP000463">
    <property type="protein sequence ID" value="ABJ08839.1"/>
    <property type="molecule type" value="Genomic_DNA"/>
</dbReference>
<dbReference type="SMR" id="Q07GU5"/>
<dbReference type="STRING" id="316055.RPE_4920"/>
<dbReference type="KEGG" id="rpe:RPE_4920"/>
<dbReference type="eggNOG" id="COG0268">
    <property type="taxonomic scope" value="Bacteria"/>
</dbReference>
<dbReference type="HOGENOM" id="CLU_160655_3_0_5"/>
<dbReference type="OrthoDB" id="9807974at2"/>
<dbReference type="GO" id="GO:0005829">
    <property type="term" value="C:cytosol"/>
    <property type="evidence" value="ECO:0007669"/>
    <property type="project" value="TreeGrafter"/>
</dbReference>
<dbReference type="GO" id="GO:0015935">
    <property type="term" value="C:small ribosomal subunit"/>
    <property type="evidence" value="ECO:0007669"/>
    <property type="project" value="TreeGrafter"/>
</dbReference>
<dbReference type="GO" id="GO:0070181">
    <property type="term" value="F:small ribosomal subunit rRNA binding"/>
    <property type="evidence" value="ECO:0007669"/>
    <property type="project" value="TreeGrafter"/>
</dbReference>
<dbReference type="GO" id="GO:0003735">
    <property type="term" value="F:structural constituent of ribosome"/>
    <property type="evidence" value="ECO:0007669"/>
    <property type="project" value="InterPro"/>
</dbReference>
<dbReference type="GO" id="GO:0006412">
    <property type="term" value="P:translation"/>
    <property type="evidence" value="ECO:0007669"/>
    <property type="project" value="UniProtKB-UniRule"/>
</dbReference>
<dbReference type="Gene3D" id="1.20.58.110">
    <property type="entry name" value="Ribosomal protein S20"/>
    <property type="match status" value="1"/>
</dbReference>
<dbReference type="HAMAP" id="MF_00500">
    <property type="entry name" value="Ribosomal_bS20"/>
    <property type="match status" value="1"/>
</dbReference>
<dbReference type="InterPro" id="IPR002583">
    <property type="entry name" value="Ribosomal_bS20"/>
</dbReference>
<dbReference type="InterPro" id="IPR036510">
    <property type="entry name" value="Ribosomal_bS20_sf"/>
</dbReference>
<dbReference type="NCBIfam" id="TIGR00029">
    <property type="entry name" value="S20"/>
    <property type="match status" value="1"/>
</dbReference>
<dbReference type="PANTHER" id="PTHR33398">
    <property type="entry name" value="30S RIBOSOMAL PROTEIN S20"/>
    <property type="match status" value="1"/>
</dbReference>
<dbReference type="PANTHER" id="PTHR33398:SF1">
    <property type="entry name" value="SMALL RIBOSOMAL SUBUNIT PROTEIN BS20C"/>
    <property type="match status" value="1"/>
</dbReference>
<dbReference type="Pfam" id="PF01649">
    <property type="entry name" value="Ribosomal_S20p"/>
    <property type="match status" value="1"/>
</dbReference>
<dbReference type="SUPFAM" id="SSF46992">
    <property type="entry name" value="Ribosomal protein S20"/>
    <property type="match status" value="1"/>
</dbReference>
<comment type="function">
    <text evidence="1">Binds directly to 16S ribosomal RNA.</text>
</comment>
<comment type="similarity">
    <text evidence="1">Belongs to the bacterial ribosomal protein bS20 family.</text>
</comment>
<sequence length="88" mass="9831">MANTTSAKKATRKIARRTIVNKSRRTQMRGAVRTVEEAIAKGDRDAAVKAMTRCEPELMQAAQRNIIHRNAASRKVSRLTQKIAKLAK</sequence>
<protein>
    <recommendedName>
        <fullName evidence="1">Small ribosomal subunit protein bS20</fullName>
    </recommendedName>
    <alternativeName>
        <fullName evidence="2">30S ribosomal protein S20</fullName>
    </alternativeName>
</protein>
<accession>Q07GU5</accession>
<evidence type="ECO:0000255" key="1">
    <source>
        <dbReference type="HAMAP-Rule" id="MF_00500"/>
    </source>
</evidence>
<evidence type="ECO:0000305" key="2"/>
<gene>
    <name evidence="1" type="primary">rpsT</name>
    <name type="ordered locus">RPE_4920</name>
</gene>
<proteinExistence type="inferred from homology"/>
<feature type="chain" id="PRO_1000014637" description="Small ribosomal subunit protein bS20">
    <location>
        <begin position="1"/>
        <end position="88"/>
    </location>
</feature>